<evidence type="ECO:0000250" key="1">
    <source>
        <dbReference type="UniProtKB" id="Q96CX2"/>
    </source>
</evidence>
<evidence type="ECO:0000256" key="2">
    <source>
        <dbReference type="SAM" id="MobiDB-lite"/>
    </source>
</evidence>
<evidence type="ECO:0000269" key="3">
    <source>
    </source>
</evidence>
<evidence type="ECO:0000305" key="4"/>
<evidence type="ECO:0007744" key="5">
    <source>
    </source>
</evidence>
<evidence type="ECO:0007744" key="6">
    <source>
    </source>
</evidence>
<evidence type="ECO:0007744" key="7">
    <source>
    </source>
</evidence>
<evidence type="ECO:0007744" key="8">
    <source>
    </source>
</evidence>
<gene>
    <name type="primary">Kctd12</name>
    <name type="synonym">Pfet1</name>
</gene>
<reference key="1">
    <citation type="journal article" date="2004" name="J. Assoc. Res. Otolaryngol.">
        <title>Isolation from cochlea of a novel human intronless gene with predominant fetal expression.</title>
        <authorList>
            <person name="Resendes B.L."/>
            <person name="Kuo S.F."/>
            <person name="Robertson N.G."/>
            <person name="Giersch A.B."/>
            <person name="Honrubia D."/>
            <person name="Ohara O."/>
            <person name="Adams J.C."/>
            <person name="Morton C.C."/>
        </authorList>
    </citation>
    <scope>NUCLEOTIDE SEQUENCE [GENOMIC DNA]</scope>
    <source>
        <strain>Czech II</strain>
    </source>
</reference>
<reference key="2">
    <citation type="journal article" date="2005" name="Science">
        <title>The transcriptional landscape of the mammalian genome.</title>
        <authorList>
            <person name="Carninci P."/>
            <person name="Kasukawa T."/>
            <person name="Katayama S."/>
            <person name="Gough J."/>
            <person name="Frith M.C."/>
            <person name="Maeda N."/>
            <person name="Oyama R."/>
            <person name="Ravasi T."/>
            <person name="Lenhard B."/>
            <person name="Wells C."/>
            <person name="Kodzius R."/>
            <person name="Shimokawa K."/>
            <person name="Bajic V.B."/>
            <person name="Brenner S.E."/>
            <person name="Batalov S."/>
            <person name="Forrest A.R."/>
            <person name="Zavolan M."/>
            <person name="Davis M.J."/>
            <person name="Wilming L.G."/>
            <person name="Aidinis V."/>
            <person name="Allen J.E."/>
            <person name="Ambesi-Impiombato A."/>
            <person name="Apweiler R."/>
            <person name="Aturaliya R.N."/>
            <person name="Bailey T.L."/>
            <person name="Bansal M."/>
            <person name="Baxter L."/>
            <person name="Beisel K.W."/>
            <person name="Bersano T."/>
            <person name="Bono H."/>
            <person name="Chalk A.M."/>
            <person name="Chiu K.P."/>
            <person name="Choudhary V."/>
            <person name="Christoffels A."/>
            <person name="Clutterbuck D.R."/>
            <person name="Crowe M.L."/>
            <person name="Dalla E."/>
            <person name="Dalrymple B.P."/>
            <person name="de Bono B."/>
            <person name="Della Gatta G."/>
            <person name="di Bernardo D."/>
            <person name="Down T."/>
            <person name="Engstrom P."/>
            <person name="Fagiolini M."/>
            <person name="Faulkner G."/>
            <person name="Fletcher C.F."/>
            <person name="Fukushima T."/>
            <person name="Furuno M."/>
            <person name="Futaki S."/>
            <person name="Gariboldi M."/>
            <person name="Georgii-Hemming P."/>
            <person name="Gingeras T.R."/>
            <person name="Gojobori T."/>
            <person name="Green R.E."/>
            <person name="Gustincich S."/>
            <person name="Harbers M."/>
            <person name="Hayashi Y."/>
            <person name="Hensch T.K."/>
            <person name="Hirokawa N."/>
            <person name="Hill D."/>
            <person name="Huminiecki L."/>
            <person name="Iacono M."/>
            <person name="Ikeo K."/>
            <person name="Iwama A."/>
            <person name="Ishikawa T."/>
            <person name="Jakt M."/>
            <person name="Kanapin A."/>
            <person name="Katoh M."/>
            <person name="Kawasawa Y."/>
            <person name="Kelso J."/>
            <person name="Kitamura H."/>
            <person name="Kitano H."/>
            <person name="Kollias G."/>
            <person name="Krishnan S.P."/>
            <person name="Kruger A."/>
            <person name="Kummerfeld S.K."/>
            <person name="Kurochkin I.V."/>
            <person name="Lareau L.F."/>
            <person name="Lazarevic D."/>
            <person name="Lipovich L."/>
            <person name="Liu J."/>
            <person name="Liuni S."/>
            <person name="McWilliam S."/>
            <person name="Madan Babu M."/>
            <person name="Madera M."/>
            <person name="Marchionni L."/>
            <person name="Matsuda H."/>
            <person name="Matsuzawa S."/>
            <person name="Miki H."/>
            <person name="Mignone F."/>
            <person name="Miyake S."/>
            <person name="Morris K."/>
            <person name="Mottagui-Tabar S."/>
            <person name="Mulder N."/>
            <person name="Nakano N."/>
            <person name="Nakauchi H."/>
            <person name="Ng P."/>
            <person name="Nilsson R."/>
            <person name="Nishiguchi S."/>
            <person name="Nishikawa S."/>
            <person name="Nori F."/>
            <person name="Ohara O."/>
            <person name="Okazaki Y."/>
            <person name="Orlando V."/>
            <person name="Pang K.C."/>
            <person name="Pavan W.J."/>
            <person name="Pavesi G."/>
            <person name="Pesole G."/>
            <person name="Petrovsky N."/>
            <person name="Piazza S."/>
            <person name="Reed J."/>
            <person name="Reid J.F."/>
            <person name="Ring B.Z."/>
            <person name="Ringwald M."/>
            <person name="Rost B."/>
            <person name="Ruan Y."/>
            <person name="Salzberg S.L."/>
            <person name="Sandelin A."/>
            <person name="Schneider C."/>
            <person name="Schoenbach C."/>
            <person name="Sekiguchi K."/>
            <person name="Semple C.A."/>
            <person name="Seno S."/>
            <person name="Sessa L."/>
            <person name="Sheng Y."/>
            <person name="Shibata Y."/>
            <person name="Shimada H."/>
            <person name="Shimada K."/>
            <person name="Silva D."/>
            <person name="Sinclair B."/>
            <person name="Sperling S."/>
            <person name="Stupka E."/>
            <person name="Sugiura K."/>
            <person name="Sultana R."/>
            <person name="Takenaka Y."/>
            <person name="Taki K."/>
            <person name="Tammoja K."/>
            <person name="Tan S.L."/>
            <person name="Tang S."/>
            <person name="Taylor M.S."/>
            <person name="Tegner J."/>
            <person name="Teichmann S.A."/>
            <person name="Ueda H.R."/>
            <person name="van Nimwegen E."/>
            <person name="Verardo R."/>
            <person name="Wei C.L."/>
            <person name="Yagi K."/>
            <person name="Yamanishi H."/>
            <person name="Zabarovsky E."/>
            <person name="Zhu S."/>
            <person name="Zimmer A."/>
            <person name="Hide W."/>
            <person name="Bult C."/>
            <person name="Grimmond S.M."/>
            <person name="Teasdale R.D."/>
            <person name="Liu E.T."/>
            <person name="Brusic V."/>
            <person name="Quackenbush J."/>
            <person name="Wahlestedt C."/>
            <person name="Mattick J.S."/>
            <person name="Hume D.A."/>
            <person name="Kai C."/>
            <person name="Sasaki D."/>
            <person name="Tomaru Y."/>
            <person name="Fukuda S."/>
            <person name="Kanamori-Katayama M."/>
            <person name="Suzuki M."/>
            <person name="Aoki J."/>
            <person name="Arakawa T."/>
            <person name="Iida J."/>
            <person name="Imamura K."/>
            <person name="Itoh M."/>
            <person name="Kato T."/>
            <person name="Kawaji H."/>
            <person name="Kawagashira N."/>
            <person name="Kawashima T."/>
            <person name="Kojima M."/>
            <person name="Kondo S."/>
            <person name="Konno H."/>
            <person name="Nakano K."/>
            <person name="Ninomiya N."/>
            <person name="Nishio T."/>
            <person name="Okada M."/>
            <person name="Plessy C."/>
            <person name="Shibata K."/>
            <person name="Shiraki T."/>
            <person name="Suzuki S."/>
            <person name="Tagami M."/>
            <person name="Waki K."/>
            <person name="Watahiki A."/>
            <person name="Okamura-Oho Y."/>
            <person name="Suzuki H."/>
            <person name="Kawai J."/>
            <person name="Hayashizaki Y."/>
        </authorList>
    </citation>
    <scope>NUCLEOTIDE SEQUENCE [LARGE SCALE MRNA]</scope>
    <source>
        <strain>NOD</strain>
        <tissue>Spleen</tissue>
    </source>
</reference>
<reference key="3">
    <citation type="journal article" date="2004" name="Mol. Cell. Proteomics">
        <title>Phosphoproteomic analysis of the developing mouse brain.</title>
        <authorList>
            <person name="Ballif B.A."/>
            <person name="Villen J."/>
            <person name="Beausoleil S.A."/>
            <person name="Schwartz D."/>
            <person name="Gygi S.P."/>
        </authorList>
    </citation>
    <scope>PHOSPHORYLATION [LARGE SCALE ANALYSIS] AT SER-153</scope>
    <scope>IDENTIFICATION BY MASS SPECTROMETRY [LARGE SCALE ANALYSIS]</scope>
    <source>
        <tissue>Embryonic brain</tissue>
    </source>
</reference>
<reference key="4">
    <citation type="journal article" date="2007" name="Proc. Natl. Acad. Sci. U.S.A.">
        <title>Large-scale phosphorylation analysis of mouse liver.</title>
        <authorList>
            <person name="Villen J."/>
            <person name="Beausoleil S.A."/>
            <person name="Gerber S.A."/>
            <person name="Gygi S.P."/>
        </authorList>
    </citation>
    <scope>PHOSPHORYLATION [LARGE SCALE ANALYSIS] AT THR-198</scope>
    <scope>IDENTIFICATION BY MASS SPECTROMETRY [LARGE SCALE ANALYSIS]</scope>
    <source>
        <tissue>Liver</tissue>
    </source>
</reference>
<reference key="5">
    <citation type="journal article" date="2008" name="J. Proteome Res.">
        <title>Large-scale identification and evolution indexing of tyrosine phosphorylation sites from murine brain.</title>
        <authorList>
            <person name="Ballif B.A."/>
            <person name="Carey G.R."/>
            <person name="Sunyaev S.R."/>
            <person name="Gygi S.P."/>
        </authorList>
    </citation>
    <scope>PHOSPHORYLATION [LARGE SCALE ANALYSIS] AT TYR-119</scope>
    <scope>IDENTIFICATION BY MASS SPECTROMETRY [LARGE SCALE ANALYSIS]</scope>
    <source>
        <tissue>Brain</tissue>
    </source>
</reference>
<reference key="6">
    <citation type="journal article" date="2010" name="Cell">
        <title>A tissue-specific atlas of mouse protein phosphorylation and expression.</title>
        <authorList>
            <person name="Huttlin E.L."/>
            <person name="Jedrychowski M.P."/>
            <person name="Elias J.E."/>
            <person name="Goswami T."/>
            <person name="Rad R."/>
            <person name="Beausoleil S.A."/>
            <person name="Villen J."/>
            <person name="Haas W."/>
            <person name="Sowa M.E."/>
            <person name="Gygi S.P."/>
        </authorList>
    </citation>
    <scope>PHOSPHORYLATION [LARGE SCALE ANALYSIS] AT SER-153; SER-173; THR-198 AND SER-202</scope>
    <scope>IDENTIFICATION BY MASS SPECTROMETRY [LARGE SCALE ANALYSIS]</scope>
    <source>
        <tissue>Brain</tissue>
        <tissue>Brown adipose tissue</tissue>
        <tissue>Heart</tissue>
        <tissue>Kidney</tissue>
        <tissue>Liver</tissue>
        <tissue>Lung</tissue>
        <tissue>Pancreas</tissue>
        <tissue>Spleen</tissue>
        <tissue>Testis</tissue>
    </source>
</reference>
<reference key="7">
    <citation type="journal article" date="2010" name="Nature">
        <title>Native GABA(B) receptors are heteromultimers with a family of auxiliary subunits.</title>
        <authorList>
            <person name="Schwenk J."/>
            <person name="Metz M."/>
            <person name="Zolles G."/>
            <person name="Turecek R."/>
            <person name="Fritzius T."/>
            <person name="Bildl W."/>
            <person name="Tarusawa E."/>
            <person name="Kulik A."/>
            <person name="Unger A."/>
            <person name="Ivankova K."/>
            <person name="Seddik R."/>
            <person name="Tiao J.Y."/>
            <person name="Rajalu M."/>
            <person name="Trojanova J."/>
            <person name="Rohde V."/>
            <person name="Gassmann M."/>
            <person name="Schulte U."/>
            <person name="Fakler B."/>
            <person name="Bettler B."/>
        </authorList>
    </citation>
    <scope>FUNCTION</scope>
    <scope>INTERACTION WITH GABBR1 AND GABBR2</scope>
    <scope>TETRAMERIZATION</scope>
    <scope>SUBCELLULAR LOCATION</scope>
    <scope>TISSUE SPECIFICITY</scope>
</reference>
<sequence length="327" mass="35892">MALADSARGLPNGGGGGGGSGSSSSSAEPPLFPDIVELNVGGQVYVTRRCTVVSVPDSLLWRMFTQQQPQELARDSKGRFFLDRDGFFFRYILDYLRDLQLVLPDYFPERSRLQREAEYFELPELVRRLGAPQQPGPGPPPPHSRRGVHKEGSLGDELLPLGYAEPEPQEGASAGAPSPTLELASRSPSGGAAGPLLTPSQSLDGSRRSGYITIGYRGSYTIGRDAQADAKFRRVARITVCGKTSLAKEVFGDTLNESRDPDRPPERYTSRYYLKFNFLEQAFDKLSESGFHMVACSSTGTCAFASSTDQSEDKIWTSYTEYVFCRE</sequence>
<keyword id="KW-0007">Acetylation</keyword>
<keyword id="KW-1003">Cell membrane</keyword>
<keyword id="KW-0966">Cell projection</keyword>
<keyword id="KW-0472">Membrane</keyword>
<keyword id="KW-0597">Phosphoprotein</keyword>
<keyword id="KW-0628">Postsynaptic cell membrane</keyword>
<keyword id="KW-1185">Reference proteome</keyword>
<keyword id="KW-0770">Synapse</keyword>
<organism>
    <name type="scientific">Mus musculus</name>
    <name type="common">Mouse</name>
    <dbReference type="NCBI Taxonomy" id="10090"/>
    <lineage>
        <taxon>Eukaryota</taxon>
        <taxon>Metazoa</taxon>
        <taxon>Chordata</taxon>
        <taxon>Craniata</taxon>
        <taxon>Vertebrata</taxon>
        <taxon>Euteleostomi</taxon>
        <taxon>Mammalia</taxon>
        <taxon>Eutheria</taxon>
        <taxon>Euarchontoglires</taxon>
        <taxon>Glires</taxon>
        <taxon>Rodentia</taxon>
        <taxon>Myomorpha</taxon>
        <taxon>Muroidea</taxon>
        <taxon>Muridae</taxon>
        <taxon>Murinae</taxon>
        <taxon>Mus</taxon>
        <taxon>Mus</taxon>
    </lineage>
</organism>
<accession>Q6WVG3</accession>
<accession>Q3T9E3</accession>
<comment type="function">
    <text evidence="3">Auxiliary subunit of GABA-B receptors that determine the pharmacology and kinetics of the receptor response. Increases agonist potency and markedly alter the G-protein signaling of the receptors by accelerating onset and promoting desensitization.</text>
</comment>
<comment type="subunit">
    <text evidence="3">Interacts as a tetramer with GABBR1 and GABBR2.</text>
</comment>
<comment type="subcellular location">
    <subcellularLocation>
        <location evidence="3">Presynaptic cell membrane</location>
    </subcellularLocation>
    <subcellularLocation>
        <location evidence="3">Postsynaptic cell membrane</location>
    </subcellularLocation>
    <text>Colocalizes with GABBR1.</text>
</comment>
<comment type="tissue specificity">
    <text evidence="3">Expressed in the brain, mainly in the hippocampus and cerebellum.</text>
</comment>
<feature type="initiator methionine" description="Removed" evidence="1">
    <location>
        <position position="1"/>
    </location>
</feature>
<feature type="chain" id="PRO_0000191296" description="BTB/POZ domain-containing protein KCTD12">
    <location>
        <begin position="2"/>
        <end position="327"/>
    </location>
</feature>
<feature type="region of interest" description="Disordered" evidence="2">
    <location>
        <begin position="1"/>
        <end position="28"/>
    </location>
</feature>
<feature type="region of interest" description="Disordered" evidence="2">
    <location>
        <begin position="129"/>
        <end position="204"/>
    </location>
</feature>
<feature type="compositionally biased region" description="Gly residues" evidence="2">
    <location>
        <begin position="11"/>
        <end position="21"/>
    </location>
</feature>
<feature type="modified residue" description="N-acetylalanine" evidence="1">
    <location>
        <position position="2"/>
    </location>
</feature>
<feature type="modified residue" description="Phosphotyrosine" evidence="7">
    <location>
        <position position="119"/>
    </location>
</feature>
<feature type="modified residue" description="Phosphoserine" evidence="5 8">
    <location>
        <position position="153"/>
    </location>
</feature>
<feature type="modified residue" description="Phosphoserine" evidence="8">
    <location>
        <position position="173"/>
    </location>
</feature>
<feature type="modified residue" description="Phosphoserine" evidence="1">
    <location>
        <position position="187"/>
    </location>
</feature>
<feature type="modified residue" description="Phosphothreonine" evidence="6 8">
    <location>
        <position position="198"/>
    </location>
</feature>
<feature type="modified residue" description="Phosphoserine" evidence="8">
    <location>
        <position position="202"/>
    </location>
</feature>
<feature type="sequence conflict" description="In Ref. 2; BAE43079." evidence="4" ref="2">
    <original>A</original>
    <variation>T</variation>
    <location>
        <position position="7"/>
    </location>
</feature>
<feature type="sequence conflict" description="In Ref. 2; BAE43079." evidence="4" ref="2">
    <original>F</original>
    <variation>L</variation>
    <location>
        <position position="88"/>
    </location>
</feature>
<name>KCD12_MOUSE</name>
<protein>
    <recommendedName>
        <fullName>BTB/POZ domain-containing protein KCTD12</fullName>
    </recommendedName>
    <alternativeName>
        <fullName>Pfetin</fullName>
    </alternativeName>
    <alternativeName>
        <fullName>Predominantly fetal expressed T1 domain</fullName>
    </alternativeName>
</protein>
<dbReference type="EMBL" id="AY267461">
    <property type="protein sequence ID" value="AAP92150.1"/>
    <property type="molecule type" value="Genomic_DNA"/>
</dbReference>
<dbReference type="EMBL" id="AK172581">
    <property type="protein sequence ID" value="BAE43079.1"/>
    <property type="molecule type" value="mRNA"/>
</dbReference>
<dbReference type="CCDS" id="CCDS70611.1"/>
<dbReference type="RefSeq" id="NP_808383.3">
    <property type="nucleotide sequence ID" value="NM_177715.4"/>
</dbReference>
<dbReference type="SMR" id="Q6WVG3"/>
<dbReference type="BioGRID" id="232062">
    <property type="interactions" value="18"/>
</dbReference>
<dbReference type="CORUM" id="Q6WVG3"/>
<dbReference type="FunCoup" id="Q6WVG3">
    <property type="interactions" value="182"/>
</dbReference>
<dbReference type="IntAct" id="Q6WVG3">
    <property type="interactions" value="3"/>
</dbReference>
<dbReference type="MINT" id="Q6WVG3"/>
<dbReference type="STRING" id="10090.ENSMUSP00000139261"/>
<dbReference type="ChEMBL" id="CHEMBL4523353"/>
<dbReference type="GlyGen" id="Q6WVG3">
    <property type="glycosylation" value="2 sites, 1 O-linked glycan (1 site)"/>
</dbReference>
<dbReference type="iPTMnet" id="Q6WVG3"/>
<dbReference type="PhosphoSitePlus" id="Q6WVG3"/>
<dbReference type="SwissPalm" id="Q6WVG3"/>
<dbReference type="jPOST" id="Q6WVG3"/>
<dbReference type="PaxDb" id="10090-ENSMUSP00000139261"/>
<dbReference type="PeptideAtlas" id="Q6WVG3"/>
<dbReference type="ProteomicsDB" id="269186"/>
<dbReference type="DNASU" id="239217"/>
<dbReference type="GeneID" id="239217"/>
<dbReference type="KEGG" id="mmu:239217"/>
<dbReference type="UCSC" id="uc007uwe.1">
    <property type="organism name" value="mouse"/>
</dbReference>
<dbReference type="AGR" id="MGI:2145823"/>
<dbReference type="CTD" id="115207"/>
<dbReference type="MGI" id="MGI:2145823">
    <property type="gene designation" value="Kctd12"/>
</dbReference>
<dbReference type="eggNOG" id="KOG2723">
    <property type="taxonomic scope" value="Eukaryota"/>
</dbReference>
<dbReference type="InParanoid" id="Q6WVG3"/>
<dbReference type="OrthoDB" id="52149at9989"/>
<dbReference type="PhylomeDB" id="Q6WVG3"/>
<dbReference type="BioGRID-ORCS" id="239217">
    <property type="hits" value="1 hit in 71 CRISPR screens"/>
</dbReference>
<dbReference type="ChiTaRS" id="Kctd12">
    <property type="organism name" value="mouse"/>
</dbReference>
<dbReference type="PRO" id="PR:Q6WVG3"/>
<dbReference type="Proteomes" id="UP000000589">
    <property type="component" value="Unplaced"/>
</dbReference>
<dbReference type="RNAct" id="Q6WVG3">
    <property type="molecule type" value="protein"/>
</dbReference>
<dbReference type="GO" id="GO:0042995">
    <property type="term" value="C:cell projection"/>
    <property type="evidence" value="ECO:0007669"/>
    <property type="project" value="UniProtKB-KW"/>
</dbReference>
<dbReference type="GO" id="GO:0098982">
    <property type="term" value="C:GABA-ergic synapse"/>
    <property type="evidence" value="ECO:0000314"/>
    <property type="project" value="SynGO"/>
</dbReference>
<dbReference type="GO" id="GO:0045211">
    <property type="term" value="C:postsynaptic membrane"/>
    <property type="evidence" value="ECO:0000314"/>
    <property type="project" value="MGI"/>
</dbReference>
<dbReference type="GO" id="GO:0048787">
    <property type="term" value="C:presynaptic active zone membrane"/>
    <property type="evidence" value="ECO:0000314"/>
    <property type="project" value="SynGO"/>
</dbReference>
<dbReference type="GO" id="GO:0042734">
    <property type="term" value="C:presynaptic membrane"/>
    <property type="evidence" value="ECO:0000314"/>
    <property type="project" value="MGI"/>
</dbReference>
<dbReference type="GO" id="GO:0043235">
    <property type="term" value="C:receptor complex"/>
    <property type="evidence" value="ECO:0000314"/>
    <property type="project" value="MGI"/>
</dbReference>
<dbReference type="GO" id="GO:0099579">
    <property type="term" value="F:G protein-coupled neurotransmitter receptor activity involved in regulation of postsynaptic membrane potential"/>
    <property type="evidence" value="ECO:0000314"/>
    <property type="project" value="SynGO"/>
</dbReference>
<dbReference type="GO" id="GO:0150047">
    <property type="term" value="F:G protein-coupled neurotransmitter receptor activity involved in regulation of presynaptic membrane potential"/>
    <property type="evidence" value="ECO:0000314"/>
    <property type="project" value="SynGO"/>
</dbReference>
<dbReference type="GO" id="GO:0051260">
    <property type="term" value="P:protein homooligomerization"/>
    <property type="evidence" value="ECO:0007669"/>
    <property type="project" value="InterPro"/>
</dbReference>
<dbReference type="GO" id="GO:0008277">
    <property type="term" value="P:regulation of G protein-coupled receptor signaling pathway"/>
    <property type="evidence" value="ECO:0000316"/>
    <property type="project" value="MGI"/>
</dbReference>
<dbReference type="CDD" id="cd22217">
    <property type="entry name" value="H1_KCTD12"/>
    <property type="match status" value="1"/>
</dbReference>
<dbReference type="FunFam" id="3.30.710.10:FF:000031">
    <property type="entry name" value="BTB/POZ domain-containing protein KCTD16"/>
    <property type="match status" value="1"/>
</dbReference>
<dbReference type="Gene3D" id="3.30.710.10">
    <property type="entry name" value="Potassium Channel Kv1.1, Chain A"/>
    <property type="match status" value="1"/>
</dbReference>
<dbReference type="InterPro" id="IPR000210">
    <property type="entry name" value="BTB/POZ_dom"/>
</dbReference>
<dbReference type="InterPro" id="IPR049905">
    <property type="entry name" value="H1_KCTD12"/>
</dbReference>
<dbReference type="InterPro" id="IPR011333">
    <property type="entry name" value="SKP1/BTB/POZ_sf"/>
</dbReference>
<dbReference type="InterPro" id="IPR003131">
    <property type="entry name" value="T1-type_BTB"/>
</dbReference>
<dbReference type="PANTHER" id="PTHR14499:SF29">
    <property type="entry name" value="BTB_POZ DOMAIN-CONTAINING PROTEIN KCTD12"/>
    <property type="match status" value="1"/>
</dbReference>
<dbReference type="PANTHER" id="PTHR14499">
    <property type="entry name" value="POTASSIUM CHANNEL TETRAMERIZATION DOMAIN-CONTAINING"/>
    <property type="match status" value="1"/>
</dbReference>
<dbReference type="Pfam" id="PF02214">
    <property type="entry name" value="BTB_2"/>
    <property type="match status" value="1"/>
</dbReference>
<dbReference type="Pfam" id="PF23110">
    <property type="entry name" value="H1_KCTD8_12_16"/>
    <property type="match status" value="1"/>
</dbReference>
<dbReference type="SMART" id="SM00225">
    <property type="entry name" value="BTB"/>
    <property type="match status" value="1"/>
</dbReference>
<dbReference type="SUPFAM" id="SSF54695">
    <property type="entry name" value="POZ domain"/>
    <property type="match status" value="1"/>
</dbReference>
<proteinExistence type="evidence at protein level"/>